<proteinExistence type="inferred from homology"/>
<gene>
    <name type="ordered locus">Arth_2474</name>
</gene>
<feature type="chain" id="PRO_1000009188" description="UPF0102 protein Arth_2474">
    <location>
        <begin position="1"/>
        <end position="118"/>
    </location>
</feature>
<keyword id="KW-1185">Reference proteome</keyword>
<reference key="1">
    <citation type="journal article" date="2013" name="Stand. Genomic Sci.">
        <title>Complete genome sequence of Arthrobacter sp. strain FB24.</title>
        <authorList>
            <person name="Nakatsu C.H."/>
            <person name="Barabote R."/>
            <person name="Thompson S."/>
            <person name="Bruce D."/>
            <person name="Detter C."/>
            <person name="Brettin T."/>
            <person name="Han C."/>
            <person name="Beasley F."/>
            <person name="Chen W."/>
            <person name="Konopka A."/>
            <person name="Xie G."/>
        </authorList>
    </citation>
    <scope>NUCLEOTIDE SEQUENCE [LARGE SCALE GENOMIC DNA]</scope>
    <source>
        <strain>FB24</strain>
    </source>
</reference>
<protein>
    <recommendedName>
        <fullName evidence="1">UPF0102 protein Arth_2474</fullName>
    </recommendedName>
</protein>
<accession>A0JXT3</accession>
<comment type="similarity">
    <text evidence="1">Belongs to the UPF0102 family.</text>
</comment>
<organism>
    <name type="scientific">Arthrobacter sp. (strain FB24)</name>
    <dbReference type="NCBI Taxonomy" id="290399"/>
    <lineage>
        <taxon>Bacteria</taxon>
        <taxon>Bacillati</taxon>
        <taxon>Actinomycetota</taxon>
        <taxon>Actinomycetes</taxon>
        <taxon>Micrococcales</taxon>
        <taxon>Micrococcaceae</taxon>
        <taxon>Arthrobacter</taxon>
    </lineage>
</organism>
<dbReference type="EMBL" id="CP000454">
    <property type="protein sequence ID" value="ABK03853.1"/>
    <property type="molecule type" value="Genomic_DNA"/>
</dbReference>
<dbReference type="RefSeq" id="WP_011692316.1">
    <property type="nucleotide sequence ID" value="NC_008541.1"/>
</dbReference>
<dbReference type="SMR" id="A0JXT3"/>
<dbReference type="STRING" id="290399.Arth_2474"/>
<dbReference type="KEGG" id="art:Arth_2474"/>
<dbReference type="eggNOG" id="COG0792">
    <property type="taxonomic scope" value="Bacteria"/>
</dbReference>
<dbReference type="HOGENOM" id="CLU_115353_2_3_11"/>
<dbReference type="OrthoDB" id="9794876at2"/>
<dbReference type="Proteomes" id="UP000000754">
    <property type="component" value="Chromosome"/>
</dbReference>
<dbReference type="GO" id="GO:0003676">
    <property type="term" value="F:nucleic acid binding"/>
    <property type="evidence" value="ECO:0007669"/>
    <property type="project" value="InterPro"/>
</dbReference>
<dbReference type="CDD" id="cd20736">
    <property type="entry name" value="PoNe_Nuclease"/>
    <property type="match status" value="1"/>
</dbReference>
<dbReference type="Gene3D" id="3.40.1350.10">
    <property type="match status" value="1"/>
</dbReference>
<dbReference type="HAMAP" id="MF_00048">
    <property type="entry name" value="UPF0102"/>
    <property type="match status" value="1"/>
</dbReference>
<dbReference type="InterPro" id="IPR011335">
    <property type="entry name" value="Restrct_endonuc-II-like"/>
</dbReference>
<dbReference type="InterPro" id="IPR011856">
    <property type="entry name" value="tRNA_endonuc-like_dom_sf"/>
</dbReference>
<dbReference type="InterPro" id="IPR003509">
    <property type="entry name" value="UPF0102_YraN-like"/>
</dbReference>
<dbReference type="NCBIfam" id="NF009150">
    <property type="entry name" value="PRK12497.1-3"/>
    <property type="match status" value="1"/>
</dbReference>
<dbReference type="NCBIfam" id="NF009154">
    <property type="entry name" value="PRK12497.3-3"/>
    <property type="match status" value="1"/>
</dbReference>
<dbReference type="PANTHER" id="PTHR34039">
    <property type="entry name" value="UPF0102 PROTEIN YRAN"/>
    <property type="match status" value="1"/>
</dbReference>
<dbReference type="PANTHER" id="PTHR34039:SF1">
    <property type="entry name" value="UPF0102 PROTEIN YRAN"/>
    <property type="match status" value="1"/>
</dbReference>
<dbReference type="Pfam" id="PF02021">
    <property type="entry name" value="UPF0102"/>
    <property type="match status" value="1"/>
</dbReference>
<dbReference type="SUPFAM" id="SSF52980">
    <property type="entry name" value="Restriction endonuclease-like"/>
    <property type="match status" value="1"/>
</dbReference>
<name>Y2474_ARTS2</name>
<evidence type="ECO:0000255" key="1">
    <source>
        <dbReference type="HAMAP-Rule" id="MF_00048"/>
    </source>
</evidence>
<sequence length="118" mass="13089">MRAKDLLGRRGEELAAGYLESQGMRIVDRNWRCSEGEIDIVALDGDSLVIAEVKTRKSLAYGHPFEAVGVAKLARLHRLASAWCRDHELRMPCRRVDVVAVLDDGAGQPRVEHLRGVG</sequence>